<protein>
    <recommendedName>
        <fullName evidence="3">Insulin-like growth factor 1</fullName>
    </recommendedName>
    <alternativeName>
        <fullName evidence="7">Insulin-like growth factor I</fullName>
        <shortName evidence="7">IGF-I</shortName>
    </alternativeName>
    <alternativeName>
        <fullName>Somatomedin</fullName>
    </alternativeName>
</protein>
<comment type="function">
    <text evidence="2 3 4">The insulin-like growth factors, isolated from plasma, are structurally and functionally related to insulin but have a much higher growth-promoting activity. May be a physiological regulator of [1-14C]-2-deoxy-D-glucose (2DG) transport and glycogen synthesis in osteoblasts. Stimulates glucose transport in bone-derived osteoblastic (PyMS) cells and is effective at much lower concentrations than insulin, not only regarding glycogen and DNA synthesis but also with regard to enhancing glucose uptake. May play a role in synapse maturation. Ca(2+)-dependent exocytosis of IGF1 is required for sensory perception of smell in the olfactory bulb. Acts as a ligand for IGF1R. Binds to the alpha subunit of IGF1R, leading to the activation of the intrinsic tyrosine kinase activity which autophosphorylates tyrosine residues in the beta subunit thus initiating a cascade of down-stream signaling events leading to activation of the PI3K-AKT/PKB and the Ras-MAPK pathways. Binds to integrins ITGAV:ITGB3 and ITGA6:ITGB4. Its binding to integrins and subsequent ternary complex formation with integrins and IGFR1 are essential for IGF1 signaling. Induces the phosphorylation and activation of IGFR1, MAPK3/ERK1, MAPK1/ERK2 and AKT1 (By similarity). As part of the MAPK/ERK signaling pathway, acts as a negative regulator of apoptosis in cardiomyocytes via promotion of STUB1/CHIP-mediated ubiquitination and degradation of ICER-type isoforms of CREM (By similarity).</text>
</comment>
<comment type="subunit">
    <text evidence="3">Forms a ternary complex with IGFR1 and ITGAV:ITGB3. Forms a ternary complex with IGFR1 and ITGA6:ITGB4. Forms a ternary complex with IGFBP3 and ALS.</text>
</comment>
<comment type="subcellular location">
    <subcellularLocation>
        <location evidence="2">Secreted</location>
    </subcellularLocation>
</comment>
<comment type="similarity">
    <text evidence="8">Belongs to the insulin family.</text>
</comment>
<accession>Q6JLX1</accession>
<organism>
    <name type="scientific">Ailuropoda melanoleuca</name>
    <name type="common">Giant panda</name>
    <dbReference type="NCBI Taxonomy" id="9646"/>
    <lineage>
        <taxon>Eukaryota</taxon>
        <taxon>Metazoa</taxon>
        <taxon>Chordata</taxon>
        <taxon>Craniata</taxon>
        <taxon>Vertebrata</taxon>
        <taxon>Euteleostomi</taxon>
        <taxon>Mammalia</taxon>
        <taxon>Eutheria</taxon>
        <taxon>Laurasiatheria</taxon>
        <taxon>Carnivora</taxon>
        <taxon>Caniformia</taxon>
        <taxon>Ursidae</taxon>
        <taxon>Ailuropoda</taxon>
    </lineage>
</organism>
<feature type="signal peptide" evidence="5">
    <location>
        <begin position="1"/>
        <end status="unknown"/>
    </location>
</feature>
<feature type="propeptide" id="PRO_0000015644" evidence="1">
    <location>
        <begin status="unknown"/>
        <end position="48"/>
    </location>
</feature>
<feature type="chain" id="PRO_0000015645" description="Insulin-like growth factor 1">
    <location>
        <begin position="49"/>
        <end position="118"/>
    </location>
</feature>
<feature type="propeptide" id="PRO_0000015646" description="E peptide">
    <location>
        <begin position="119"/>
        <end position="153"/>
    </location>
</feature>
<feature type="region of interest" description="B">
    <location>
        <begin position="49"/>
        <end position="77"/>
    </location>
</feature>
<feature type="region of interest" description="C">
    <location>
        <begin position="78"/>
        <end position="89"/>
    </location>
</feature>
<feature type="region of interest" description="A">
    <location>
        <begin position="90"/>
        <end position="110"/>
    </location>
</feature>
<feature type="region of interest" description="D">
    <location>
        <begin position="111"/>
        <end position="118"/>
    </location>
</feature>
<feature type="region of interest" description="Disordered" evidence="6">
    <location>
        <begin position="120"/>
        <end position="153"/>
    </location>
</feature>
<feature type="compositionally biased region" description="Basic and acidic residues" evidence="6">
    <location>
        <begin position="125"/>
        <end position="138"/>
    </location>
</feature>
<feature type="compositionally biased region" description="Polar residues" evidence="6">
    <location>
        <begin position="142"/>
        <end position="153"/>
    </location>
</feature>
<feature type="disulfide bond" evidence="3">
    <location>
        <begin position="54"/>
        <end position="96"/>
    </location>
</feature>
<feature type="disulfide bond" evidence="3">
    <location>
        <begin position="66"/>
        <end position="109"/>
    </location>
</feature>
<feature type="disulfide bond" evidence="3">
    <location>
        <begin position="95"/>
        <end position="100"/>
    </location>
</feature>
<sequence length="153" mass="17008">MGKISSLPTQLFKCCFCDFLKVKMHIMSSSHLFYLALCLLTFTSSATAGPETLCGAELVDALQFVCGDRGFYFNKPTGYGSSSRRAPQTGIVDECCFRSCDLRRLEMYCAPLKPAKSARSVRAQRHTDMPKAQKEVHLKNASRGSAGNKNYRM</sequence>
<dbReference type="EMBL" id="AY369779">
    <property type="protein sequence ID" value="AAQ83972.2"/>
    <property type="molecule type" value="mRNA"/>
</dbReference>
<dbReference type="RefSeq" id="XP_002915500.1">
    <property type="nucleotide sequence ID" value="XM_002915454.4"/>
</dbReference>
<dbReference type="SMR" id="Q6JLX1"/>
<dbReference type="FunCoup" id="Q6JLX1">
    <property type="interactions" value="92"/>
</dbReference>
<dbReference type="STRING" id="9646.ENSAMEP00000006724"/>
<dbReference type="Ensembl" id="ENSAMET00000007008.2">
    <property type="protein sequence ID" value="ENSAMEP00000006724.2"/>
    <property type="gene ID" value="ENSAMEG00000027551.1"/>
</dbReference>
<dbReference type="GeneID" id="100473254"/>
<dbReference type="KEGG" id="aml:100473254"/>
<dbReference type="CTD" id="3479"/>
<dbReference type="eggNOG" id="ENOG502RCAB">
    <property type="taxonomic scope" value="Eukaryota"/>
</dbReference>
<dbReference type="GeneTree" id="ENSGT00940000159081"/>
<dbReference type="InParanoid" id="Q6JLX1"/>
<dbReference type="OrthoDB" id="8936076at2759"/>
<dbReference type="Proteomes" id="UP000008912">
    <property type="component" value="Unassembled WGS sequence"/>
</dbReference>
<dbReference type="GO" id="GO:0035867">
    <property type="term" value="C:alphav-beta3 integrin-IGF-1-IGF1R complex"/>
    <property type="evidence" value="ECO:0000250"/>
    <property type="project" value="UniProtKB"/>
</dbReference>
<dbReference type="GO" id="GO:0070382">
    <property type="term" value="C:exocytic vesicle"/>
    <property type="evidence" value="ECO:0000250"/>
    <property type="project" value="UniProtKB"/>
</dbReference>
<dbReference type="GO" id="GO:0005615">
    <property type="term" value="C:extracellular space"/>
    <property type="evidence" value="ECO:0007669"/>
    <property type="project" value="InterPro"/>
</dbReference>
<dbReference type="GO" id="GO:0008083">
    <property type="term" value="F:growth factor activity"/>
    <property type="evidence" value="ECO:0007669"/>
    <property type="project" value="UniProtKB-KW"/>
</dbReference>
<dbReference type="GO" id="GO:0005179">
    <property type="term" value="F:hormone activity"/>
    <property type="evidence" value="ECO:0007669"/>
    <property type="project" value="InterPro"/>
</dbReference>
<dbReference type="GO" id="GO:0005159">
    <property type="term" value="F:insulin-like growth factor receptor binding"/>
    <property type="evidence" value="ECO:0000250"/>
    <property type="project" value="UniProtKB"/>
</dbReference>
<dbReference type="GO" id="GO:0008283">
    <property type="term" value="P:cell population proliferation"/>
    <property type="evidence" value="ECO:0007669"/>
    <property type="project" value="TreeGrafter"/>
</dbReference>
<dbReference type="GO" id="GO:0048009">
    <property type="term" value="P:insulin-like growth factor receptor signaling pathway"/>
    <property type="evidence" value="ECO:0000250"/>
    <property type="project" value="UniProtKB"/>
</dbReference>
<dbReference type="GO" id="GO:0043066">
    <property type="term" value="P:negative regulation of apoptotic process"/>
    <property type="evidence" value="ECO:0000250"/>
    <property type="project" value="UniProtKB"/>
</dbReference>
<dbReference type="GO" id="GO:0090201">
    <property type="term" value="P:negative regulation of release of cytochrome c from mitochondria"/>
    <property type="evidence" value="ECO:0000250"/>
    <property type="project" value="UniProtKB"/>
</dbReference>
<dbReference type="GO" id="GO:0034392">
    <property type="term" value="P:negative regulation of smooth muscle cell apoptotic process"/>
    <property type="evidence" value="ECO:0000250"/>
    <property type="project" value="UniProtKB"/>
</dbReference>
<dbReference type="GO" id="GO:0008284">
    <property type="term" value="P:positive regulation of cell population proliferation"/>
    <property type="evidence" value="ECO:0000250"/>
    <property type="project" value="UniProtKB"/>
</dbReference>
<dbReference type="GO" id="GO:0046326">
    <property type="term" value="P:positive regulation of D-glucose import"/>
    <property type="evidence" value="ECO:0000250"/>
    <property type="project" value="UniProtKB"/>
</dbReference>
<dbReference type="GO" id="GO:0045725">
    <property type="term" value="P:positive regulation of glycogen biosynthetic process"/>
    <property type="evidence" value="ECO:0000250"/>
    <property type="project" value="UniProtKB"/>
</dbReference>
<dbReference type="GO" id="GO:0043410">
    <property type="term" value="P:positive regulation of MAPK cascade"/>
    <property type="evidence" value="ECO:0000250"/>
    <property type="project" value="UniProtKB"/>
</dbReference>
<dbReference type="GO" id="GO:0051897">
    <property type="term" value="P:positive regulation of phosphatidylinositol 3-kinase/protein kinase B signal transduction"/>
    <property type="evidence" value="ECO:0007669"/>
    <property type="project" value="TreeGrafter"/>
</dbReference>
<dbReference type="CDD" id="cd04368">
    <property type="entry name" value="IlGF"/>
    <property type="match status" value="1"/>
</dbReference>
<dbReference type="FunFam" id="1.10.100.10:FF:000001">
    <property type="entry name" value="insulin-like growth factor I isoform X1"/>
    <property type="match status" value="1"/>
</dbReference>
<dbReference type="Gene3D" id="1.10.100.10">
    <property type="entry name" value="Insulin-like"/>
    <property type="match status" value="1"/>
</dbReference>
<dbReference type="InterPro" id="IPR022341">
    <property type="entry name" value="IGF-I"/>
</dbReference>
<dbReference type="InterPro" id="IPR016179">
    <property type="entry name" value="Insulin-like"/>
</dbReference>
<dbReference type="InterPro" id="IPR022350">
    <property type="entry name" value="Insulin-like_growth_factor"/>
</dbReference>
<dbReference type="InterPro" id="IPR036438">
    <property type="entry name" value="Insulin-like_sf"/>
</dbReference>
<dbReference type="InterPro" id="IPR022353">
    <property type="entry name" value="Insulin_CS"/>
</dbReference>
<dbReference type="InterPro" id="IPR022352">
    <property type="entry name" value="Insulin_family"/>
</dbReference>
<dbReference type="PANTHER" id="PTHR46845">
    <property type="entry name" value="INSULIN-LIKE GROWTH FACTOR I"/>
    <property type="match status" value="1"/>
</dbReference>
<dbReference type="PANTHER" id="PTHR46845:SF1">
    <property type="entry name" value="INSULIN-LIKE GROWTH FACTOR I"/>
    <property type="match status" value="1"/>
</dbReference>
<dbReference type="Pfam" id="PF00049">
    <property type="entry name" value="Insulin"/>
    <property type="match status" value="1"/>
</dbReference>
<dbReference type="PRINTS" id="PR02002">
    <property type="entry name" value="INSLNLIKEGF"/>
</dbReference>
<dbReference type="PRINTS" id="PR02005">
    <property type="entry name" value="INSLNLIKEGF1"/>
</dbReference>
<dbReference type="PRINTS" id="PR00276">
    <property type="entry name" value="INSULINFAMLY"/>
</dbReference>
<dbReference type="SMART" id="SM00078">
    <property type="entry name" value="IlGF"/>
    <property type="match status" value="1"/>
</dbReference>
<dbReference type="SUPFAM" id="SSF56994">
    <property type="entry name" value="Insulin-like"/>
    <property type="match status" value="1"/>
</dbReference>
<dbReference type="PROSITE" id="PS00262">
    <property type="entry name" value="INSULIN"/>
    <property type="match status" value="1"/>
</dbReference>
<proteinExistence type="evidence at transcript level"/>
<reference key="1">
    <citation type="submission" date="2004-06" db="EMBL/GenBank/DDBJ databases">
        <title>Cloning of insulin-like growth factor I from giant panda (Ailuropoda melanoleuca) and its expression in Escherichia coli.</title>
        <authorList>
            <person name="Hu X."/>
            <person name="Zhang Z."/>
            <person name="Zhu M."/>
            <person name="Shen F."/>
            <person name="Fan W."/>
            <person name="Zhang A."/>
        </authorList>
    </citation>
    <scope>NUCLEOTIDE SEQUENCE [MRNA]</scope>
    <source>
        <tissue>Liver</tissue>
    </source>
</reference>
<name>IGF1_AILME</name>
<keyword id="KW-1015">Disulfide bond</keyword>
<keyword id="KW-0339">Growth factor</keyword>
<keyword id="KW-1185">Reference proteome</keyword>
<keyword id="KW-0964">Secreted</keyword>
<keyword id="KW-0732">Signal</keyword>
<evidence type="ECO:0000250" key="1"/>
<evidence type="ECO:0000250" key="2">
    <source>
        <dbReference type="UniProtKB" id="P05017"/>
    </source>
</evidence>
<evidence type="ECO:0000250" key="3">
    <source>
        <dbReference type="UniProtKB" id="P05019"/>
    </source>
</evidence>
<evidence type="ECO:0000250" key="4">
    <source>
        <dbReference type="UniProtKB" id="P08025"/>
    </source>
</evidence>
<evidence type="ECO:0000255" key="5"/>
<evidence type="ECO:0000256" key="6">
    <source>
        <dbReference type="SAM" id="MobiDB-lite"/>
    </source>
</evidence>
<evidence type="ECO:0000303" key="7">
    <source ref="1"/>
</evidence>
<evidence type="ECO:0000305" key="8"/>
<gene>
    <name evidence="3" type="primary">IGF1</name>
    <name evidence="3" type="synonym">IGF-1</name>
</gene>